<proteinExistence type="inferred from homology"/>
<reference key="1">
    <citation type="journal article" date="2007" name="Proc. Natl. Acad. Sci. U.S.A.">
        <title>The Orientia tsutsugamushi genome reveals massive proliferation of conjugative type IV secretion system and host-cell interaction genes.</title>
        <authorList>
            <person name="Cho N.-H."/>
            <person name="Kim H.-R."/>
            <person name="Lee J.-H."/>
            <person name="Kim S.-Y."/>
            <person name="Kim J."/>
            <person name="Cha S."/>
            <person name="Kim S.-Y."/>
            <person name="Darby A.C."/>
            <person name="Fuxelius H.-H."/>
            <person name="Yin J."/>
            <person name="Kim J.H."/>
            <person name="Kim J."/>
            <person name="Lee S.J."/>
            <person name="Koh Y.-S."/>
            <person name="Jang W.-J."/>
            <person name="Park K.-H."/>
            <person name="Andersson S.G.E."/>
            <person name="Choi M.-S."/>
            <person name="Kim I.-S."/>
        </authorList>
    </citation>
    <scope>NUCLEOTIDE SEQUENCE [LARGE SCALE GENOMIC DNA]</scope>
    <source>
        <strain>Boryong</strain>
    </source>
</reference>
<comment type="function">
    <text evidence="1">Catalyzes the attachment of threonine to tRNA(Thr) in a two-step reaction: L-threonine is first activated by ATP to form Thr-AMP and then transferred to the acceptor end of tRNA(Thr). Also edits incorrectly charged L-seryl-tRNA(Thr).</text>
</comment>
<comment type="catalytic activity">
    <reaction evidence="1">
        <text>tRNA(Thr) + L-threonine + ATP = L-threonyl-tRNA(Thr) + AMP + diphosphate + H(+)</text>
        <dbReference type="Rhea" id="RHEA:24624"/>
        <dbReference type="Rhea" id="RHEA-COMP:9670"/>
        <dbReference type="Rhea" id="RHEA-COMP:9704"/>
        <dbReference type="ChEBI" id="CHEBI:15378"/>
        <dbReference type="ChEBI" id="CHEBI:30616"/>
        <dbReference type="ChEBI" id="CHEBI:33019"/>
        <dbReference type="ChEBI" id="CHEBI:57926"/>
        <dbReference type="ChEBI" id="CHEBI:78442"/>
        <dbReference type="ChEBI" id="CHEBI:78534"/>
        <dbReference type="ChEBI" id="CHEBI:456215"/>
        <dbReference type="EC" id="6.1.1.3"/>
    </reaction>
</comment>
<comment type="cofactor">
    <cofactor evidence="1">
        <name>Zn(2+)</name>
        <dbReference type="ChEBI" id="CHEBI:29105"/>
    </cofactor>
    <text evidence="1">Binds 1 zinc ion per subunit.</text>
</comment>
<comment type="subunit">
    <text evidence="1">Homodimer.</text>
</comment>
<comment type="subcellular location">
    <subcellularLocation>
        <location evidence="1">Cytoplasm</location>
    </subcellularLocation>
</comment>
<comment type="similarity">
    <text evidence="1">Belongs to the class-II aminoacyl-tRNA synthetase family.</text>
</comment>
<keyword id="KW-0030">Aminoacyl-tRNA synthetase</keyword>
<keyword id="KW-0067">ATP-binding</keyword>
<keyword id="KW-0963">Cytoplasm</keyword>
<keyword id="KW-0436">Ligase</keyword>
<keyword id="KW-0479">Metal-binding</keyword>
<keyword id="KW-0547">Nucleotide-binding</keyword>
<keyword id="KW-0648">Protein biosynthesis</keyword>
<keyword id="KW-1185">Reference proteome</keyword>
<keyword id="KW-0694">RNA-binding</keyword>
<keyword id="KW-0820">tRNA-binding</keyword>
<keyword id="KW-0862">Zinc</keyword>
<accession>A5CD12</accession>
<dbReference type="EC" id="6.1.1.3" evidence="1"/>
<dbReference type="EMBL" id="AM494475">
    <property type="protein sequence ID" value="CAM79649.1"/>
    <property type="molecule type" value="Genomic_DNA"/>
</dbReference>
<dbReference type="RefSeq" id="WP_011944561.1">
    <property type="nucleotide sequence ID" value="NC_009488.1"/>
</dbReference>
<dbReference type="SMR" id="A5CD12"/>
<dbReference type="KEGG" id="ots:OTBS_0583"/>
<dbReference type="eggNOG" id="COG0441">
    <property type="taxonomic scope" value="Bacteria"/>
</dbReference>
<dbReference type="HOGENOM" id="CLU_008554_0_1_5"/>
<dbReference type="Proteomes" id="UP000001565">
    <property type="component" value="Chromosome"/>
</dbReference>
<dbReference type="GO" id="GO:0005737">
    <property type="term" value="C:cytoplasm"/>
    <property type="evidence" value="ECO:0007669"/>
    <property type="project" value="UniProtKB-SubCell"/>
</dbReference>
<dbReference type="GO" id="GO:0005524">
    <property type="term" value="F:ATP binding"/>
    <property type="evidence" value="ECO:0007669"/>
    <property type="project" value="UniProtKB-UniRule"/>
</dbReference>
<dbReference type="GO" id="GO:0046872">
    <property type="term" value="F:metal ion binding"/>
    <property type="evidence" value="ECO:0007669"/>
    <property type="project" value="UniProtKB-KW"/>
</dbReference>
<dbReference type="GO" id="GO:0004829">
    <property type="term" value="F:threonine-tRNA ligase activity"/>
    <property type="evidence" value="ECO:0007669"/>
    <property type="project" value="UniProtKB-UniRule"/>
</dbReference>
<dbReference type="GO" id="GO:0000049">
    <property type="term" value="F:tRNA binding"/>
    <property type="evidence" value="ECO:0007669"/>
    <property type="project" value="UniProtKB-KW"/>
</dbReference>
<dbReference type="GO" id="GO:0006435">
    <property type="term" value="P:threonyl-tRNA aminoacylation"/>
    <property type="evidence" value="ECO:0007669"/>
    <property type="project" value="UniProtKB-UniRule"/>
</dbReference>
<dbReference type="CDD" id="cd01667">
    <property type="entry name" value="TGS_ThrRS"/>
    <property type="match status" value="1"/>
</dbReference>
<dbReference type="CDD" id="cd00860">
    <property type="entry name" value="ThrRS_anticodon"/>
    <property type="match status" value="1"/>
</dbReference>
<dbReference type="CDD" id="cd00771">
    <property type="entry name" value="ThrRS_core"/>
    <property type="match status" value="1"/>
</dbReference>
<dbReference type="FunFam" id="3.30.54.20:FF:000002">
    <property type="entry name" value="Threonine--tRNA ligase"/>
    <property type="match status" value="1"/>
</dbReference>
<dbReference type="FunFam" id="3.30.930.10:FF:000002">
    <property type="entry name" value="Threonine--tRNA ligase"/>
    <property type="match status" value="1"/>
</dbReference>
<dbReference type="FunFam" id="3.40.50.800:FF:000001">
    <property type="entry name" value="Threonine--tRNA ligase"/>
    <property type="match status" value="1"/>
</dbReference>
<dbReference type="FunFam" id="3.30.980.10:FF:000005">
    <property type="entry name" value="Threonyl-tRNA synthetase, mitochondrial"/>
    <property type="match status" value="1"/>
</dbReference>
<dbReference type="Gene3D" id="3.10.20.30">
    <property type="match status" value="1"/>
</dbReference>
<dbReference type="Gene3D" id="3.30.54.20">
    <property type="match status" value="1"/>
</dbReference>
<dbReference type="Gene3D" id="3.40.50.800">
    <property type="entry name" value="Anticodon-binding domain"/>
    <property type="match status" value="1"/>
</dbReference>
<dbReference type="Gene3D" id="3.30.930.10">
    <property type="entry name" value="Bira Bifunctional Protein, Domain 2"/>
    <property type="match status" value="1"/>
</dbReference>
<dbReference type="Gene3D" id="3.30.980.10">
    <property type="entry name" value="Threonyl-trna Synthetase, Chain A, domain 2"/>
    <property type="match status" value="1"/>
</dbReference>
<dbReference type="HAMAP" id="MF_00184">
    <property type="entry name" value="Thr_tRNA_synth"/>
    <property type="match status" value="1"/>
</dbReference>
<dbReference type="InterPro" id="IPR002314">
    <property type="entry name" value="aa-tRNA-synt_IIb"/>
</dbReference>
<dbReference type="InterPro" id="IPR006195">
    <property type="entry name" value="aa-tRNA-synth_II"/>
</dbReference>
<dbReference type="InterPro" id="IPR045864">
    <property type="entry name" value="aa-tRNA-synth_II/BPL/LPL"/>
</dbReference>
<dbReference type="InterPro" id="IPR004154">
    <property type="entry name" value="Anticodon-bd"/>
</dbReference>
<dbReference type="InterPro" id="IPR036621">
    <property type="entry name" value="Anticodon-bd_dom_sf"/>
</dbReference>
<dbReference type="InterPro" id="IPR012675">
    <property type="entry name" value="Beta-grasp_dom_sf"/>
</dbReference>
<dbReference type="InterPro" id="IPR004095">
    <property type="entry name" value="TGS"/>
</dbReference>
<dbReference type="InterPro" id="IPR012676">
    <property type="entry name" value="TGS-like"/>
</dbReference>
<dbReference type="InterPro" id="IPR002320">
    <property type="entry name" value="Thr-tRNA-ligase_IIa"/>
</dbReference>
<dbReference type="InterPro" id="IPR018163">
    <property type="entry name" value="Thr/Ala-tRNA-synth_IIc_edit"/>
</dbReference>
<dbReference type="InterPro" id="IPR047246">
    <property type="entry name" value="ThrRS_anticodon"/>
</dbReference>
<dbReference type="InterPro" id="IPR033728">
    <property type="entry name" value="ThrRS_core"/>
</dbReference>
<dbReference type="InterPro" id="IPR012947">
    <property type="entry name" value="tRNA_SAD"/>
</dbReference>
<dbReference type="NCBIfam" id="TIGR00418">
    <property type="entry name" value="thrS"/>
    <property type="match status" value="1"/>
</dbReference>
<dbReference type="PANTHER" id="PTHR11451:SF44">
    <property type="entry name" value="THREONINE--TRNA LIGASE, CHLOROPLASTIC_MITOCHONDRIAL 2"/>
    <property type="match status" value="1"/>
</dbReference>
<dbReference type="PANTHER" id="PTHR11451">
    <property type="entry name" value="THREONINE-TRNA LIGASE"/>
    <property type="match status" value="1"/>
</dbReference>
<dbReference type="Pfam" id="PF03129">
    <property type="entry name" value="HGTP_anticodon"/>
    <property type="match status" value="1"/>
</dbReference>
<dbReference type="Pfam" id="PF00587">
    <property type="entry name" value="tRNA-synt_2b"/>
    <property type="match status" value="1"/>
</dbReference>
<dbReference type="Pfam" id="PF07973">
    <property type="entry name" value="tRNA_SAD"/>
    <property type="match status" value="1"/>
</dbReference>
<dbReference type="PRINTS" id="PR01047">
    <property type="entry name" value="TRNASYNTHTHR"/>
</dbReference>
<dbReference type="SMART" id="SM00863">
    <property type="entry name" value="tRNA_SAD"/>
    <property type="match status" value="1"/>
</dbReference>
<dbReference type="SUPFAM" id="SSF52954">
    <property type="entry name" value="Class II aaRS ABD-related"/>
    <property type="match status" value="1"/>
</dbReference>
<dbReference type="SUPFAM" id="SSF55681">
    <property type="entry name" value="Class II aaRS and biotin synthetases"/>
    <property type="match status" value="1"/>
</dbReference>
<dbReference type="SUPFAM" id="SSF81271">
    <property type="entry name" value="TGS-like"/>
    <property type="match status" value="1"/>
</dbReference>
<dbReference type="SUPFAM" id="SSF55186">
    <property type="entry name" value="ThrRS/AlaRS common domain"/>
    <property type="match status" value="1"/>
</dbReference>
<dbReference type="PROSITE" id="PS50862">
    <property type="entry name" value="AA_TRNA_LIGASE_II"/>
    <property type="match status" value="1"/>
</dbReference>
<dbReference type="PROSITE" id="PS51880">
    <property type="entry name" value="TGS"/>
    <property type="match status" value="1"/>
</dbReference>
<feature type="chain" id="PRO_1000020454" description="Threonine--tRNA ligase">
    <location>
        <begin position="1"/>
        <end position="648"/>
    </location>
</feature>
<feature type="domain" description="TGS" evidence="2">
    <location>
        <begin position="1"/>
        <end position="61"/>
    </location>
</feature>
<feature type="region of interest" description="Catalytic" evidence="1">
    <location>
        <begin position="243"/>
        <end position="549"/>
    </location>
</feature>
<feature type="binding site" evidence="1">
    <location>
        <position position="349"/>
    </location>
    <ligand>
        <name>Zn(2+)</name>
        <dbReference type="ChEBI" id="CHEBI:29105"/>
    </ligand>
</feature>
<feature type="binding site" evidence="1">
    <location>
        <position position="400"/>
    </location>
    <ligand>
        <name>Zn(2+)</name>
        <dbReference type="ChEBI" id="CHEBI:29105"/>
    </ligand>
</feature>
<feature type="binding site" evidence="1">
    <location>
        <position position="526"/>
    </location>
    <ligand>
        <name>Zn(2+)</name>
        <dbReference type="ChEBI" id="CHEBI:29105"/>
    </ligand>
</feature>
<evidence type="ECO:0000255" key="1">
    <source>
        <dbReference type="HAMAP-Rule" id="MF_00184"/>
    </source>
</evidence>
<evidence type="ECO:0000255" key="2">
    <source>
        <dbReference type="PROSITE-ProRule" id="PRU01228"/>
    </source>
</evidence>
<protein>
    <recommendedName>
        <fullName evidence="1">Threonine--tRNA ligase</fullName>
        <ecNumber evidence="1">6.1.1.3</ecNumber>
    </recommendedName>
    <alternativeName>
        <fullName evidence="1">Threonyl-tRNA synthetase</fullName>
        <shortName evidence="1">ThrRS</shortName>
    </alternativeName>
</protein>
<organism>
    <name type="scientific">Orientia tsutsugamushi (strain Boryong)</name>
    <name type="common">Rickettsia tsutsugamushi</name>
    <dbReference type="NCBI Taxonomy" id="357244"/>
    <lineage>
        <taxon>Bacteria</taxon>
        <taxon>Pseudomonadati</taxon>
        <taxon>Pseudomonadota</taxon>
        <taxon>Alphaproteobacteria</taxon>
        <taxon>Rickettsiales</taxon>
        <taxon>Rickettsiaceae</taxon>
        <taxon>Rickettsieae</taxon>
        <taxon>Orientia</taxon>
    </lineage>
</organism>
<name>SYT_ORITB</name>
<sequence length="648" mass="74698">MIDIILPDGSVKQYKIGVTGQEIIQSLSISLFKKTIAVEINNELIDLYIPIINTATVKAITIDSVQGIEILRHDTAHILAQAVKKLFPDTQVVIGPVIKDGFYYDFARDKPFTNKDLEVIEQEMQDIIAKNDLIQREVWLRAKAIEFFKQQKEFYKVKLIEEIPESEEISIYRQGNFVDLCRGPHSPSTGYCTKYFKLTKVSGAYWRGNSKNEVLQRIYGTAWEKKSDLDSYLHRLSEAQKRDHRKLGRELELFHFQDEAQGMPFWHDKGWTIFKIIKNYISCQIQRAGYIEVNTPMVLSQKLWEKSGHWEKFRENMFTLDTNVAEKDHNLIKDSIETKCALALKPMNCPGHIQIFNYTIKSYRDLPLRMAEFGSCHRYEPSGALYGLMRVRSFVQDDAHIFCTEDQITDETIKFCHLLKQVYQDFGFPEVKIKFSDRPEKRAGTDKIWDKAEQALIHAIQTLGEEYTINRGEGAFYGPKLEFILTDAIGREWQCGTLQVDFVLPERLNASYISSEGSKKRPVILHRAILGSFERFIGILIEHYSGRLPIWLAPIQVAVVSITDEAVNYAKQLHQELIDNNIRSTLDISNQKINYKIRNFFTAKVPLIAILGKKESESGKIAIRTLGSQEQQVISSSELIAHIRKNKK</sequence>
<gene>
    <name evidence="1" type="primary">thrS</name>
    <name type="ordered locus">OTBS_0583</name>
</gene>